<gene>
    <name type="primary">FAM234A</name>
    <name type="synonym">ITFG3</name>
</gene>
<comment type="subcellular location">
    <subcellularLocation>
        <location evidence="2">Membrane</location>
        <topology evidence="2">Single-pass type II membrane protein</topology>
    </subcellularLocation>
</comment>
<comment type="similarity">
    <text evidence="2">Belongs to the FAM234 family.</text>
</comment>
<protein>
    <recommendedName>
        <fullName>Protein FAM234A</fullName>
    </recommendedName>
    <alternativeName>
        <fullName>Protein ITFG3</fullName>
    </alternativeName>
</protein>
<dbReference type="EMBL" id="BC105518">
    <property type="protein sequence ID" value="AAI05519.1"/>
    <property type="molecule type" value="mRNA"/>
</dbReference>
<dbReference type="RefSeq" id="NP_001068786.1">
    <property type="nucleotide sequence ID" value="NM_001075318.1"/>
</dbReference>
<dbReference type="RefSeq" id="XP_005201040.1">
    <property type="nucleotide sequence ID" value="XM_005200983.5"/>
</dbReference>
<dbReference type="RefSeq" id="XP_005201041.1">
    <property type="nucleotide sequence ID" value="XM_005200984.3"/>
</dbReference>
<dbReference type="RefSeq" id="XP_005201042.1">
    <property type="nucleotide sequence ID" value="XM_005200985.5"/>
</dbReference>
<dbReference type="RefSeq" id="XP_005201043.1">
    <property type="nucleotide sequence ID" value="XM_005200986.5"/>
</dbReference>
<dbReference type="RefSeq" id="XP_005201044.1">
    <property type="nucleotide sequence ID" value="XM_005200987.5"/>
</dbReference>
<dbReference type="RefSeq" id="XP_010799078.1">
    <property type="nucleotide sequence ID" value="XM_010800776.2"/>
</dbReference>
<dbReference type="RefSeq" id="XP_015331337.1">
    <property type="nucleotide sequence ID" value="XM_015475851.1"/>
</dbReference>
<dbReference type="RefSeq" id="XP_059737196.1">
    <property type="nucleotide sequence ID" value="XM_059881213.1"/>
</dbReference>
<dbReference type="RefSeq" id="XP_059737197.1">
    <property type="nucleotide sequence ID" value="XM_059881214.1"/>
</dbReference>
<dbReference type="FunCoup" id="Q2HJE5">
    <property type="interactions" value="393"/>
</dbReference>
<dbReference type="STRING" id="9913.ENSBTAP00000064867"/>
<dbReference type="GlyCosmos" id="Q2HJE5">
    <property type="glycosylation" value="3 sites, No reported glycans"/>
</dbReference>
<dbReference type="GlyGen" id="Q2HJE5">
    <property type="glycosylation" value="3 sites"/>
</dbReference>
<dbReference type="PaxDb" id="9913-ENSBTAP00000022045"/>
<dbReference type="GeneID" id="507493"/>
<dbReference type="KEGG" id="bta:507493"/>
<dbReference type="CTD" id="83986"/>
<dbReference type="VEuPathDB" id="HostDB:ENSBTAG00000016571"/>
<dbReference type="eggNOG" id="ENOG502R0CE">
    <property type="taxonomic scope" value="Eukaryota"/>
</dbReference>
<dbReference type="HOGENOM" id="CLU_036490_0_0_1"/>
<dbReference type="InParanoid" id="Q2HJE5"/>
<dbReference type="OMA" id="FMFWGLM"/>
<dbReference type="OrthoDB" id="6364780at2759"/>
<dbReference type="TreeFam" id="TF327203"/>
<dbReference type="Proteomes" id="UP000009136">
    <property type="component" value="Chromosome 25"/>
</dbReference>
<dbReference type="Bgee" id="ENSBTAG00000016571">
    <property type="expression patterns" value="Expressed in esophagus and 105 other cell types or tissues"/>
</dbReference>
<dbReference type="GO" id="GO:0009986">
    <property type="term" value="C:cell surface"/>
    <property type="evidence" value="ECO:0000318"/>
    <property type="project" value="GO_Central"/>
</dbReference>
<dbReference type="GO" id="GO:0016020">
    <property type="term" value="C:membrane"/>
    <property type="evidence" value="ECO:0007669"/>
    <property type="project" value="UniProtKB-SubCell"/>
</dbReference>
<dbReference type="FunFam" id="2.130.10.10:FF:002632">
    <property type="entry name" value="Protein FAM234A"/>
    <property type="match status" value="1"/>
</dbReference>
<dbReference type="Gene3D" id="2.130.10.10">
    <property type="entry name" value="YVTN repeat-like/Quinoprotein amine dehydrogenase"/>
    <property type="match status" value="1"/>
</dbReference>
<dbReference type="InterPro" id="IPR045232">
    <property type="entry name" value="FAM234"/>
</dbReference>
<dbReference type="InterPro" id="IPR055409">
    <property type="entry name" value="FAM234A_B_beta-prop"/>
</dbReference>
<dbReference type="InterPro" id="IPR011047">
    <property type="entry name" value="Quinoprotein_ADH-like_sf"/>
</dbReference>
<dbReference type="InterPro" id="IPR015943">
    <property type="entry name" value="WD40/YVTN_repeat-like_dom_sf"/>
</dbReference>
<dbReference type="PANTHER" id="PTHR21419">
    <property type="match status" value="1"/>
</dbReference>
<dbReference type="PANTHER" id="PTHR21419:SF7">
    <property type="entry name" value="PROTEIN FAM234A"/>
    <property type="match status" value="1"/>
</dbReference>
<dbReference type="Pfam" id="PF23727">
    <property type="entry name" value="Beta-prop_FAM234A_B"/>
    <property type="match status" value="1"/>
</dbReference>
<dbReference type="SUPFAM" id="SSF50998">
    <property type="entry name" value="Quinoprotein alcohol dehydrogenase-like"/>
    <property type="match status" value="1"/>
</dbReference>
<proteinExistence type="evidence at transcript level"/>
<keyword id="KW-0325">Glycoprotein</keyword>
<keyword id="KW-0472">Membrane</keyword>
<keyword id="KW-1185">Reference proteome</keyword>
<keyword id="KW-0735">Signal-anchor</keyword>
<keyword id="KW-0812">Transmembrane</keyword>
<keyword id="KW-1133">Transmembrane helix</keyword>
<organism>
    <name type="scientific">Bos taurus</name>
    <name type="common">Bovine</name>
    <dbReference type="NCBI Taxonomy" id="9913"/>
    <lineage>
        <taxon>Eukaryota</taxon>
        <taxon>Metazoa</taxon>
        <taxon>Chordata</taxon>
        <taxon>Craniata</taxon>
        <taxon>Vertebrata</taxon>
        <taxon>Euteleostomi</taxon>
        <taxon>Mammalia</taxon>
        <taxon>Eutheria</taxon>
        <taxon>Laurasiatheria</taxon>
        <taxon>Artiodactyla</taxon>
        <taxon>Ruminantia</taxon>
        <taxon>Pecora</taxon>
        <taxon>Bovidae</taxon>
        <taxon>Bovinae</taxon>
        <taxon>Bos</taxon>
    </lineage>
</organism>
<sequence length="552" mass="58767">MTDGKDLEAEIHPLKSENRKVPENAGALAGKEPRGTPAPQTRLSHCRTAAFFLSLFACLLVVFVVSFIIPCPDRPALQGVWRIDYNAAVAYDFLAAEDVNKDKIQDILFLYKNTNSSRGNSSFSCADEGFSCPCTFVAAVSGASGSVLWERPVAQDRAFVECGILQPRGSAAPSACVVLGRPGSLVAVDTLTGKTLWSQPSSFGGNASVLSPLLRVPDLDADGAPDLLVLIQEENQVNGSIYSGGTGQQVSPPDSLGVDGTSGSILHVTRAGAHYVLIPCGTALCSRSVKGLYEKVSRRDSPLKSDPLWEDMLSAASHRLVVHSSGAIRYLMNVPGKAGDDLLLVSTEAYMLLDGQDLTPRWTFGTTQVLRKPVLGYYKPDTPAVLVENGTGPDRQVLLLDLGSGAVLWSQALPGLPGDPPSASLPTADHRSAFFFWGIHEPTDSNQTEPGAAGRRLYMLHPTLPGVLLELDNVSVPIVAFQVVLLEPGRHAACILLTGPASPSPPGLVSVTKHKVQDLVLAGRVVHLAEGGAESDQAVRDRLSRLRYRSEA</sequence>
<name>F234A_BOVIN</name>
<evidence type="ECO:0000255" key="1"/>
<evidence type="ECO:0000305" key="2"/>
<feature type="chain" id="PRO_0000247992" description="Protein FAM234A">
    <location>
        <begin position="1"/>
        <end position="552"/>
    </location>
</feature>
<feature type="topological domain" description="Cytoplasmic" evidence="1">
    <location>
        <begin position="1"/>
        <end position="48"/>
    </location>
</feature>
<feature type="transmembrane region" description="Helical; Signal-anchor for type II membrane protein" evidence="1">
    <location>
        <begin position="49"/>
        <end position="69"/>
    </location>
</feature>
<feature type="topological domain" description="Extracellular" evidence="1">
    <location>
        <begin position="70"/>
        <end position="552"/>
    </location>
</feature>
<feature type="glycosylation site" description="N-linked (GlcNAc...) asparagine" evidence="1">
    <location>
        <position position="115"/>
    </location>
</feature>
<feature type="glycosylation site" description="N-linked (GlcNAc...) asparagine" evidence="1">
    <location>
        <position position="238"/>
    </location>
</feature>
<feature type="glycosylation site" description="N-linked (GlcNAc...) asparagine" evidence="1">
    <location>
        <position position="473"/>
    </location>
</feature>
<accession>Q2HJE5</accession>
<reference key="1">
    <citation type="submission" date="2005-09" db="EMBL/GenBank/DDBJ databases">
        <authorList>
            <consortium name="NIH - Mammalian Gene Collection (MGC) project"/>
        </authorList>
    </citation>
    <scope>NUCLEOTIDE SEQUENCE [LARGE SCALE MRNA]</scope>
    <source>
        <strain>Hereford</strain>
        <tissue>Uterus</tissue>
    </source>
</reference>